<dbReference type="EC" id="3.2.1.8"/>
<dbReference type="EMBL" id="Z83310">
    <property type="protein sequence ID" value="CAB05886.1"/>
    <property type="molecule type" value="Genomic_DNA"/>
</dbReference>
<dbReference type="EMBL" id="Z83199">
    <property type="protein sequence ID" value="CAB05665.1"/>
    <property type="molecule type" value="mRNA"/>
</dbReference>
<dbReference type="SMR" id="O60206"/>
<dbReference type="CAZy" id="GH10">
    <property type="family name" value="Glycoside Hydrolase Family 10"/>
</dbReference>
<dbReference type="UniPathway" id="UPA00114"/>
<dbReference type="GO" id="GO:0005576">
    <property type="term" value="C:extracellular region"/>
    <property type="evidence" value="ECO:0007669"/>
    <property type="project" value="UniProtKB-SubCell"/>
</dbReference>
<dbReference type="GO" id="GO:0031176">
    <property type="term" value="F:endo-1,4-beta-xylanase activity"/>
    <property type="evidence" value="ECO:0007669"/>
    <property type="project" value="UniProtKB-EC"/>
</dbReference>
<dbReference type="GO" id="GO:0045493">
    <property type="term" value="P:xylan catabolic process"/>
    <property type="evidence" value="ECO:0007669"/>
    <property type="project" value="UniProtKB-UniPathway"/>
</dbReference>
<dbReference type="Gene3D" id="3.20.20.80">
    <property type="entry name" value="Glycosidases"/>
    <property type="match status" value="1"/>
</dbReference>
<dbReference type="InterPro" id="IPR044846">
    <property type="entry name" value="GH10"/>
</dbReference>
<dbReference type="InterPro" id="IPR031158">
    <property type="entry name" value="GH10_AS"/>
</dbReference>
<dbReference type="InterPro" id="IPR001000">
    <property type="entry name" value="GH10_dom"/>
</dbReference>
<dbReference type="InterPro" id="IPR017853">
    <property type="entry name" value="Glycoside_hydrolase_SF"/>
</dbReference>
<dbReference type="PANTHER" id="PTHR31490:SF35">
    <property type="entry name" value="ENDO-1,4-BETA-XYLANASE"/>
    <property type="match status" value="1"/>
</dbReference>
<dbReference type="PANTHER" id="PTHR31490">
    <property type="entry name" value="GLYCOSYL HYDROLASE"/>
    <property type="match status" value="1"/>
</dbReference>
<dbReference type="Pfam" id="PF00331">
    <property type="entry name" value="Glyco_hydro_10"/>
    <property type="match status" value="1"/>
</dbReference>
<dbReference type="PRINTS" id="PR00134">
    <property type="entry name" value="GLHYDRLASE10"/>
</dbReference>
<dbReference type="SMART" id="SM00633">
    <property type="entry name" value="Glyco_10"/>
    <property type="match status" value="1"/>
</dbReference>
<dbReference type="SUPFAM" id="SSF51445">
    <property type="entry name" value="(Trans)glycosidases"/>
    <property type="match status" value="1"/>
</dbReference>
<dbReference type="PROSITE" id="PS00591">
    <property type="entry name" value="GH10_1"/>
    <property type="match status" value="1"/>
</dbReference>
<dbReference type="PROSITE" id="PS51760">
    <property type="entry name" value="GH10_2"/>
    <property type="match status" value="1"/>
</dbReference>
<feature type="signal peptide" evidence="2">
    <location>
        <begin position="1"/>
        <end position="17"/>
    </location>
</feature>
<feature type="chain" id="PRO_0000007962" description="Endo-1,4-beta-xylanase">
    <location>
        <begin position="18"/>
        <end position="333"/>
    </location>
</feature>
<feature type="domain" description="GH10" evidence="3">
    <location>
        <begin position="18"/>
        <end position="330"/>
    </location>
</feature>
<feature type="active site" description="Proton donor" evidence="1">
    <location>
        <position position="147"/>
    </location>
</feature>
<feature type="active site" description="Nucleophile" evidence="4">
    <location>
        <position position="252"/>
    </location>
</feature>
<protein>
    <recommendedName>
        <fullName>Endo-1,4-beta-xylanase</fullName>
        <shortName>Xylanase</shortName>
        <ecNumber>3.2.1.8</ecNumber>
    </recommendedName>
</protein>
<name>XLNA_AGABI</name>
<sequence length="333" mass="36847">MYLVAFMLLAILPTGYCQLNTLAVRAGKKYFGTATDNPELGDAPYVAQLGNTADFNQITAGNSMKWDATEPSRGTFTFSNGDTVANMARNRGQLLRGHTCVWHSQLPNWVTSGNFDNSTLLSIVQNHCSTLVSHYRGQMYSWDVVNEPFNEDGSFRQSVFFQKTGTAYIATALRAARNADPNTKLYINDFNIEGTGAKSTGMINLVRSLQQQNVPIDGIGVQAHLIVGQIPSSIQQNLQNFANLGVEVAITELDIRMTLPVTQQKLEQQQEDYRTVIRACKAVSRCVGVTVWDWTDRYSWVPGVFNGEGAACPWDENLAKKPAYQGIVDGWSQ</sequence>
<accession>O60206</accession>
<gene>
    <name type="primary">xlnA</name>
</gene>
<organism>
    <name type="scientific">Agaricus bisporus</name>
    <name type="common">White button mushroom</name>
    <dbReference type="NCBI Taxonomy" id="5341"/>
    <lineage>
        <taxon>Eukaryota</taxon>
        <taxon>Fungi</taxon>
        <taxon>Dikarya</taxon>
        <taxon>Basidiomycota</taxon>
        <taxon>Agaricomycotina</taxon>
        <taxon>Agaricomycetes</taxon>
        <taxon>Agaricomycetidae</taxon>
        <taxon>Agaricales</taxon>
        <taxon>Agaricineae</taxon>
        <taxon>Agaricaceae</taxon>
        <taxon>Agaricus</taxon>
    </lineage>
</organism>
<reference key="1">
    <citation type="journal article" date="1998" name="J. Mol. Biol.">
        <title>An endo-1,4-beta-xylanase-encoding gene from Agaricus bisporus is regulated by compost-specific factors.</title>
        <authorList>
            <person name="De Groot P.W.J."/>
            <person name="Basten D.E.J.W."/>
            <person name="Sonnenberg A.S.M."/>
            <person name="van Griensven L.J.L.D."/>
            <person name="Visser J."/>
            <person name="Schaap P.J."/>
        </authorList>
    </citation>
    <scope>NUCLEOTIDE SEQUENCE [GENOMIC DNA / MRNA]</scope>
    <source>
        <strain>Horst H39</strain>
        <strain>Horst U1</strain>
    </source>
</reference>
<comment type="function">
    <text>Has xylanase activity. Seems to be involved in the release of sugars from the hemicellulolytic fraction in the compost.</text>
</comment>
<comment type="catalytic activity">
    <reaction>
        <text>Endohydrolysis of (1-&gt;4)-beta-D-xylosidic linkages in xylans.</text>
        <dbReference type="EC" id="3.2.1.8"/>
    </reaction>
</comment>
<comment type="pathway">
    <text>Glycan degradation; xylan degradation.</text>
</comment>
<comment type="subcellular location">
    <subcellularLocation>
        <location>Secreted</location>
    </subcellularLocation>
</comment>
<comment type="induction">
    <text>Repressed on glucose.</text>
</comment>
<comment type="similarity">
    <text evidence="5">Belongs to the glycosyl hydrolase 10 (cellulase F) family.</text>
</comment>
<proteinExistence type="evidence at transcript level"/>
<evidence type="ECO:0000250" key="1"/>
<evidence type="ECO:0000255" key="2"/>
<evidence type="ECO:0000255" key="3">
    <source>
        <dbReference type="PROSITE-ProRule" id="PRU01096"/>
    </source>
</evidence>
<evidence type="ECO:0000255" key="4">
    <source>
        <dbReference type="PROSITE-ProRule" id="PRU10061"/>
    </source>
</evidence>
<evidence type="ECO:0000305" key="5"/>
<keyword id="KW-0119">Carbohydrate metabolism</keyword>
<keyword id="KW-0326">Glycosidase</keyword>
<keyword id="KW-0378">Hydrolase</keyword>
<keyword id="KW-0624">Polysaccharide degradation</keyword>
<keyword id="KW-0964">Secreted</keyword>
<keyword id="KW-0732">Signal</keyword>
<keyword id="KW-0858">Xylan degradation</keyword>